<name>RL28_PARDP</name>
<proteinExistence type="inferred from homology"/>
<feature type="chain" id="PRO_1000007295" description="Large ribosomal subunit protein bL28">
    <location>
        <begin position="1"/>
        <end position="91"/>
    </location>
</feature>
<feature type="region of interest" description="Disordered" evidence="2">
    <location>
        <begin position="1"/>
        <end position="23"/>
    </location>
</feature>
<accession>A1B4S6</accession>
<protein>
    <recommendedName>
        <fullName evidence="1">Large ribosomal subunit protein bL28</fullName>
    </recommendedName>
    <alternativeName>
        <fullName evidence="3">50S ribosomal protein L28</fullName>
    </alternativeName>
</protein>
<keyword id="KW-1185">Reference proteome</keyword>
<keyword id="KW-0687">Ribonucleoprotein</keyword>
<keyword id="KW-0689">Ribosomal protein</keyword>
<sequence>MSRVCELTGKGPMSGNNVSHANNKTRRRFLPNLNEVSLLSEKLGRSYQLRISAAALRSVDHRGGLDAFLAKAKDAELSDRALKIKRELAKA</sequence>
<reference key="1">
    <citation type="submission" date="2006-12" db="EMBL/GenBank/DDBJ databases">
        <title>Complete sequence of chromosome 1 of Paracoccus denitrificans PD1222.</title>
        <authorList>
            <person name="Copeland A."/>
            <person name="Lucas S."/>
            <person name="Lapidus A."/>
            <person name="Barry K."/>
            <person name="Detter J.C."/>
            <person name="Glavina del Rio T."/>
            <person name="Hammon N."/>
            <person name="Israni S."/>
            <person name="Dalin E."/>
            <person name="Tice H."/>
            <person name="Pitluck S."/>
            <person name="Munk A.C."/>
            <person name="Brettin T."/>
            <person name="Bruce D."/>
            <person name="Han C."/>
            <person name="Tapia R."/>
            <person name="Gilna P."/>
            <person name="Schmutz J."/>
            <person name="Larimer F."/>
            <person name="Land M."/>
            <person name="Hauser L."/>
            <person name="Kyrpides N."/>
            <person name="Lykidis A."/>
            <person name="Spiro S."/>
            <person name="Richardson D.J."/>
            <person name="Moir J.W.B."/>
            <person name="Ferguson S.J."/>
            <person name="van Spanning R.J.M."/>
            <person name="Richardson P."/>
        </authorList>
    </citation>
    <scope>NUCLEOTIDE SEQUENCE [LARGE SCALE GENOMIC DNA]</scope>
    <source>
        <strain>Pd 1222</strain>
    </source>
</reference>
<organism>
    <name type="scientific">Paracoccus denitrificans (strain Pd 1222)</name>
    <dbReference type="NCBI Taxonomy" id="318586"/>
    <lineage>
        <taxon>Bacteria</taxon>
        <taxon>Pseudomonadati</taxon>
        <taxon>Pseudomonadota</taxon>
        <taxon>Alphaproteobacteria</taxon>
        <taxon>Rhodobacterales</taxon>
        <taxon>Paracoccaceae</taxon>
        <taxon>Paracoccus</taxon>
    </lineage>
</organism>
<dbReference type="EMBL" id="CP000489">
    <property type="protein sequence ID" value="ABL70520.1"/>
    <property type="molecule type" value="Genomic_DNA"/>
</dbReference>
<dbReference type="RefSeq" id="WP_011748713.1">
    <property type="nucleotide sequence ID" value="NC_008686.1"/>
</dbReference>
<dbReference type="SMR" id="A1B4S6"/>
<dbReference type="STRING" id="318586.Pden_2433"/>
<dbReference type="EnsemblBacteria" id="ABL70520">
    <property type="protein sequence ID" value="ABL70520"/>
    <property type="gene ID" value="Pden_2433"/>
</dbReference>
<dbReference type="GeneID" id="93450827"/>
<dbReference type="KEGG" id="pde:Pden_2433"/>
<dbReference type="eggNOG" id="COG0227">
    <property type="taxonomic scope" value="Bacteria"/>
</dbReference>
<dbReference type="HOGENOM" id="CLU_064548_4_2_5"/>
<dbReference type="OrthoDB" id="9805609at2"/>
<dbReference type="Proteomes" id="UP000000361">
    <property type="component" value="Chromosome 1"/>
</dbReference>
<dbReference type="GO" id="GO:0022625">
    <property type="term" value="C:cytosolic large ribosomal subunit"/>
    <property type="evidence" value="ECO:0007669"/>
    <property type="project" value="TreeGrafter"/>
</dbReference>
<dbReference type="GO" id="GO:0003735">
    <property type="term" value="F:structural constituent of ribosome"/>
    <property type="evidence" value="ECO:0007669"/>
    <property type="project" value="InterPro"/>
</dbReference>
<dbReference type="GO" id="GO:0006412">
    <property type="term" value="P:translation"/>
    <property type="evidence" value="ECO:0007669"/>
    <property type="project" value="UniProtKB-UniRule"/>
</dbReference>
<dbReference type="Gene3D" id="2.30.170.40">
    <property type="entry name" value="Ribosomal protein L28/L24"/>
    <property type="match status" value="1"/>
</dbReference>
<dbReference type="HAMAP" id="MF_00373">
    <property type="entry name" value="Ribosomal_bL28"/>
    <property type="match status" value="1"/>
</dbReference>
<dbReference type="InterPro" id="IPR026569">
    <property type="entry name" value="Ribosomal_bL28"/>
</dbReference>
<dbReference type="InterPro" id="IPR034704">
    <property type="entry name" value="Ribosomal_bL28/bL31-like_sf"/>
</dbReference>
<dbReference type="InterPro" id="IPR001383">
    <property type="entry name" value="Ribosomal_bL28_bact-type"/>
</dbReference>
<dbReference type="InterPro" id="IPR037147">
    <property type="entry name" value="Ribosomal_bL28_sf"/>
</dbReference>
<dbReference type="NCBIfam" id="TIGR00009">
    <property type="entry name" value="L28"/>
    <property type="match status" value="1"/>
</dbReference>
<dbReference type="PANTHER" id="PTHR13528">
    <property type="entry name" value="39S RIBOSOMAL PROTEIN L28, MITOCHONDRIAL"/>
    <property type="match status" value="1"/>
</dbReference>
<dbReference type="PANTHER" id="PTHR13528:SF2">
    <property type="entry name" value="LARGE RIBOSOMAL SUBUNIT PROTEIN BL28M"/>
    <property type="match status" value="1"/>
</dbReference>
<dbReference type="Pfam" id="PF00830">
    <property type="entry name" value="Ribosomal_L28"/>
    <property type="match status" value="1"/>
</dbReference>
<dbReference type="SUPFAM" id="SSF143800">
    <property type="entry name" value="L28p-like"/>
    <property type="match status" value="1"/>
</dbReference>
<gene>
    <name evidence="1" type="primary">rpmB</name>
    <name type="ordered locus">Pden_2433</name>
</gene>
<comment type="similarity">
    <text evidence="1">Belongs to the bacterial ribosomal protein bL28 family.</text>
</comment>
<evidence type="ECO:0000255" key="1">
    <source>
        <dbReference type="HAMAP-Rule" id="MF_00373"/>
    </source>
</evidence>
<evidence type="ECO:0000256" key="2">
    <source>
        <dbReference type="SAM" id="MobiDB-lite"/>
    </source>
</evidence>
<evidence type="ECO:0000305" key="3"/>